<sequence length="139" mass="15581">MVEKFVGTWKIADSHNFGEYLKAIGAPKELSDGGDATTPTLYISQKDGDKMTVKIENGPPTFLDTQVKFKLGEEFDEFPSDRRKGVKSVVNLVGEKLVYVQKWDGKETTYVREIKDGKLVVTLTMGDVVAVRSYRRATE</sequence>
<comment type="function">
    <text evidence="2">Beta-barrel protein that binds unconjugated bilirubin with high affinity. Excitation of the bilirubin-bound protein gives rise to green fluorescence, both under normoxia and hypoxia. The apoprotein is not fluorescent. Does not emit fluorescence in the presence of ditauro-bilirubin, urobilin or biliverdin.</text>
</comment>
<comment type="biophysicochemical properties">
    <absorption>
        <max evidence="2 3">498 nm</max>
        <text>Excitation of the bilirubin-bound protein gives rise to green fluorescence, with maximal fluorecence emission at 527 nm.</text>
    </absorption>
</comment>
<comment type="subunit">
    <text evidence="3">Monomer.</text>
</comment>
<comment type="subcellular location">
    <subcellularLocation>
        <location evidence="1">Cytoplasm</location>
    </subcellularLocation>
</comment>
<comment type="tissue specificity">
    <text evidence="2 3">Detected in small-diameter muscle fibers from the white muscle layer from juvenile animals (glass eels) (at protein level). Detected in small-diameter muscle fibers from juvenile animals (glass eels).</text>
</comment>
<comment type="domain">
    <text evidence="2">Forms a beta-barrel structure that accommodates bilirubin in its interior.</text>
</comment>
<comment type="biotechnology">
    <text evidence="2">Becomes fluorescent upon binding free, unconjugated bilirubin, a heme metabolite. Can be used as diagnostic tool to detect abnormally high levels of free bilirubin, which are indicative of impaired liver function. Could also be used in research as fluorescent marker in eukaryotic cells and animals.</text>
</comment>
<comment type="similarity">
    <text evidence="4">Belongs to the calycin superfamily. Fatty-acid binding protein (FABP) family.</text>
</comment>
<keyword id="KW-0002">3D-structure</keyword>
<keyword id="KW-0963">Cytoplasm</keyword>
<keyword id="KW-0903">Direct protein sequencing</keyword>
<keyword id="KW-0455">Luminescence</keyword>
<keyword id="KW-0599">Photoprotein</keyword>
<name>UNAG_ANGJA</name>
<reference key="1">
    <citation type="journal article" date="2013" name="Cell">
        <title>A bilirubin-inducible fluorescent protein from eel muscle.</title>
        <authorList>
            <person name="Kumagai A."/>
            <person name="Ando R."/>
            <person name="Miyatake H."/>
            <person name="Greimel P."/>
            <person name="Kobayashi T."/>
            <person name="Hirabayashi Y."/>
            <person name="Shimogori T."/>
            <person name="Miyawaki A."/>
        </authorList>
    </citation>
    <scope>NUCLEOTIDE SEQUENCE [MRNA]</scope>
    <scope>X-RAY CRYSTALLOGRAPHY (1.2 ANGSTROMS) OF WILD TYPE AND MUTANTS ALA-57 AND GLN-57 IN COMPLEXES WITH BILIRUBIN</scope>
    <scope>FUNCTION</scope>
    <scope>DOMAIN</scope>
    <scope>BIOPHYSICOCHEMICAL PROPERTIES</scope>
    <scope>BIOTECHNOLOGY</scope>
    <scope>TISSUE SPECIFICITY</scope>
    <scope>MUTAGENESIS OF ASN-57</scope>
</reference>
<reference key="2">
    <citation type="journal article" date="2009" name="Fish. Sci.">
        <title>A novel fluorescent protein purified from eel muscle.</title>
        <authorList>
            <person name="Hayashi S."/>
            <person name="Toda Y."/>
        </authorList>
    </citation>
    <scope>PARTIAL PROTEIN SEQUENCE</scope>
    <scope>BIOPHYSICOCHEMICAL PROPERTIES</scope>
    <scope>SUBUNIT</scope>
    <scope>TISSUE SPECIFICITY</scope>
</reference>
<protein>
    <recommendedName>
        <fullName>Bilirubin-inducible fluorescent protein UnaG</fullName>
    </recommendedName>
    <alternativeName>
        <fullName>Unagi green fluorescent protein</fullName>
        <shortName>UnaG</shortName>
    </alternativeName>
</protein>
<accession>P0DM59</accession>
<proteinExistence type="evidence at protein level"/>
<evidence type="ECO:0000250" key="1"/>
<evidence type="ECO:0000269" key="2">
    <source>
    </source>
</evidence>
<evidence type="ECO:0000269" key="3">
    <source ref="2"/>
</evidence>
<evidence type="ECO:0000305" key="4"/>
<evidence type="ECO:0007829" key="5">
    <source>
        <dbReference type="PDB" id="4I3B"/>
    </source>
</evidence>
<feature type="chain" id="PRO_0000423436" description="Bilirubin-inducible fluorescent protein UnaG">
    <location>
        <begin position="1"/>
        <end position="139"/>
    </location>
</feature>
<feature type="binding site">
    <location>
        <position position="57"/>
    </location>
    <ligand>
        <name>(4Z,15Z)-bilirubin IXalpha</name>
        <dbReference type="ChEBI" id="CHEBI:57977"/>
    </ligand>
</feature>
<feature type="binding site">
    <location>
        <position position="61"/>
    </location>
    <ligand>
        <name>(4Z,15Z)-bilirubin IXalpha</name>
        <dbReference type="ChEBI" id="CHEBI:57977"/>
    </ligand>
</feature>
<feature type="binding site">
    <location>
        <position position="80"/>
    </location>
    <ligand>
        <name>(4Z,15Z)-bilirubin IXalpha</name>
        <dbReference type="ChEBI" id="CHEBI:57977"/>
    </ligand>
</feature>
<feature type="binding site">
    <location>
        <position position="112"/>
    </location>
    <ligand>
        <name>(4Z,15Z)-bilirubin IXalpha</name>
        <dbReference type="ChEBI" id="CHEBI:57977"/>
    </ligand>
</feature>
<feature type="binding site">
    <location>
        <begin position="132"/>
        <end position="134"/>
    </location>
    <ligand>
        <name>(4Z,15Z)-bilirubin IXalpha</name>
        <dbReference type="ChEBI" id="CHEBI:57977"/>
    </ligand>
</feature>
<feature type="mutagenesis site" description="Abolishes fluorescence emission." evidence="2">
    <original>N</original>
    <variation>A</variation>
    <location>
        <position position="57"/>
    </location>
</feature>
<feature type="mutagenesis site" description="Reduces fluorescence emission." evidence="2">
    <original>N</original>
    <variation>Q</variation>
    <location>
        <position position="57"/>
    </location>
</feature>
<feature type="helix" evidence="5">
    <location>
        <begin position="3"/>
        <end position="5"/>
    </location>
</feature>
<feature type="strand" evidence="5">
    <location>
        <begin position="7"/>
        <end position="16"/>
    </location>
</feature>
<feature type="helix" evidence="5">
    <location>
        <begin position="17"/>
        <end position="23"/>
    </location>
</feature>
<feature type="helix" evidence="5">
    <location>
        <begin position="28"/>
        <end position="36"/>
    </location>
</feature>
<feature type="strand" evidence="5">
    <location>
        <begin position="40"/>
        <end position="46"/>
    </location>
</feature>
<feature type="turn" evidence="5">
    <location>
        <begin position="47"/>
        <end position="49"/>
    </location>
</feature>
<feature type="strand" evidence="5">
    <location>
        <begin position="50"/>
        <end position="56"/>
    </location>
</feature>
<feature type="turn" evidence="5">
    <location>
        <begin position="59"/>
        <end position="61"/>
    </location>
</feature>
<feature type="strand" evidence="5">
    <location>
        <begin position="64"/>
        <end position="70"/>
    </location>
</feature>
<feature type="strand" evidence="5">
    <location>
        <begin position="75"/>
        <end position="77"/>
    </location>
</feature>
<feature type="strand" evidence="5">
    <location>
        <begin position="84"/>
        <end position="93"/>
    </location>
</feature>
<feature type="strand" evidence="5">
    <location>
        <begin position="96"/>
        <end position="103"/>
    </location>
</feature>
<feature type="strand" evidence="5">
    <location>
        <begin position="106"/>
        <end position="115"/>
    </location>
</feature>
<feature type="strand" evidence="5">
    <location>
        <begin position="118"/>
        <end position="125"/>
    </location>
</feature>
<feature type="strand" evidence="5">
    <location>
        <begin position="128"/>
        <end position="135"/>
    </location>
</feature>
<organism>
    <name type="scientific">Anguilla japonica</name>
    <name type="common">Japanese eel</name>
    <dbReference type="NCBI Taxonomy" id="7937"/>
    <lineage>
        <taxon>Eukaryota</taxon>
        <taxon>Metazoa</taxon>
        <taxon>Chordata</taxon>
        <taxon>Craniata</taxon>
        <taxon>Vertebrata</taxon>
        <taxon>Euteleostomi</taxon>
        <taxon>Actinopterygii</taxon>
        <taxon>Neopterygii</taxon>
        <taxon>Teleostei</taxon>
        <taxon>Anguilliformes</taxon>
        <taxon>Anguillidae</taxon>
        <taxon>Anguilla</taxon>
    </lineage>
</organism>
<dbReference type="EMBL" id="AB763906">
    <property type="protein sequence ID" value="BAN57322.1"/>
    <property type="molecule type" value="mRNA"/>
</dbReference>
<dbReference type="PDB" id="4I3B">
    <property type="method" value="X-ray"/>
    <property type="resolution" value="1.20 A"/>
    <property type="chains" value="A/B/C/D/E/F=1-139"/>
</dbReference>
<dbReference type="PDB" id="4I3C">
    <property type="method" value="X-ray"/>
    <property type="resolution" value="2.00 A"/>
    <property type="chains" value="A/B=1-139"/>
</dbReference>
<dbReference type="PDB" id="4I3D">
    <property type="method" value="X-ray"/>
    <property type="resolution" value="2.30 A"/>
    <property type="chains" value="A/B/C/D=1-139"/>
</dbReference>
<dbReference type="PDBsum" id="4I3B"/>
<dbReference type="PDBsum" id="4I3C"/>
<dbReference type="PDBsum" id="4I3D"/>
<dbReference type="SMR" id="P0DM59"/>
<dbReference type="EvolutionaryTrace" id="P0DM59"/>
<dbReference type="GO" id="GO:0005737">
    <property type="term" value="C:cytoplasm"/>
    <property type="evidence" value="ECO:0007669"/>
    <property type="project" value="UniProtKB-SubCell"/>
</dbReference>
<dbReference type="GO" id="GO:0008289">
    <property type="term" value="F:lipid binding"/>
    <property type="evidence" value="ECO:0007669"/>
    <property type="project" value="InterPro"/>
</dbReference>
<dbReference type="GO" id="GO:0008218">
    <property type="term" value="P:bioluminescence"/>
    <property type="evidence" value="ECO:0007669"/>
    <property type="project" value="UniProtKB-KW"/>
</dbReference>
<dbReference type="FunFam" id="2.40.128.20:FF:000001">
    <property type="entry name" value="Fatty acid-binding protein, adipocyte"/>
    <property type="match status" value="1"/>
</dbReference>
<dbReference type="Gene3D" id="2.40.128.20">
    <property type="match status" value="1"/>
</dbReference>
<dbReference type="InterPro" id="IPR012674">
    <property type="entry name" value="Calycin"/>
</dbReference>
<dbReference type="InterPro" id="IPR000463">
    <property type="entry name" value="Fatty_acid-bd"/>
</dbReference>
<dbReference type="InterPro" id="IPR031259">
    <property type="entry name" value="ILBP"/>
</dbReference>
<dbReference type="InterPro" id="IPR000566">
    <property type="entry name" value="Lipocln_cytosolic_FA-bd_dom"/>
</dbReference>
<dbReference type="PANTHER" id="PTHR11955">
    <property type="entry name" value="FATTY ACID BINDING PROTEIN"/>
    <property type="match status" value="1"/>
</dbReference>
<dbReference type="Pfam" id="PF00061">
    <property type="entry name" value="Lipocalin"/>
    <property type="match status" value="1"/>
</dbReference>
<dbReference type="PRINTS" id="PR00178">
    <property type="entry name" value="FATTYACIDBP"/>
</dbReference>
<dbReference type="SUPFAM" id="SSF50814">
    <property type="entry name" value="Lipocalins"/>
    <property type="match status" value="1"/>
</dbReference>